<keyword id="KW-0002">3D-structure</keyword>
<keyword id="KW-0051">Antiviral defense</keyword>
<keyword id="KW-0963">Cytoplasm</keyword>
<keyword id="KW-0378">Hydrolase</keyword>
<keyword id="KW-0520">NAD</keyword>
<keyword id="KW-0547">Nucleotide-binding</keyword>
<feature type="chain" id="PRO_0000456257" description="NAD(+) hydrolase ThsA">
    <location>
        <begin position="1"/>
        <end position="476"/>
    </location>
</feature>
<feature type="domain" description="Deacetylase sirtuin-type" evidence="2">
    <location>
        <begin position="4"/>
        <end position="283"/>
    </location>
</feature>
<feature type="region of interest" description="SLOG (STALD) domain, binds 3'cADPR" evidence="4 5 6">
    <location>
        <begin position="284"/>
        <end position="476"/>
    </location>
</feature>
<feature type="active site" description="Proton acceptor" evidence="14">
    <location>
        <position position="152"/>
    </location>
</feature>
<feature type="binding site" evidence="1">
    <location>
        <position position="23"/>
    </location>
    <ligand>
        <name>NAD(+)</name>
        <dbReference type="ChEBI" id="CHEBI:57540"/>
    </ligand>
</feature>
<feature type="binding site" evidence="1">
    <location>
        <position position="114"/>
    </location>
    <ligand>
        <name>NAD(+)</name>
        <dbReference type="ChEBI" id="CHEBI:57540"/>
    </ligand>
</feature>
<feature type="binding site" evidence="1">
    <location>
        <position position="152"/>
    </location>
    <ligand>
        <name>NAD(+)</name>
        <dbReference type="ChEBI" id="CHEBI:57540"/>
    </ligand>
</feature>
<feature type="binding site" evidence="6 16">
    <location>
        <position position="289"/>
    </location>
    <ligand>
        <name>3'cADPR</name>
        <dbReference type="ChEBI" id="CHEBI:194249"/>
        <note>activator</note>
    </ligand>
</feature>
<feature type="binding site" evidence="6 16">
    <location>
        <position position="290"/>
    </location>
    <ligand>
        <name>3'cADPR</name>
        <dbReference type="ChEBI" id="CHEBI:194249"/>
        <note>activator</note>
    </ligand>
</feature>
<feature type="binding site" evidence="6 16">
    <location>
        <position position="326"/>
    </location>
    <ligand>
        <name>3'cADPR</name>
        <dbReference type="ChEBI" id="CHEBI:194249"/>
        <note>activator</note>
    </ligand>
</feature>
<feature type="binding site" evidence="6 16">
    <location>
        <position position="357"/>
    </location>
    <ligand>
        <name>3'cADPR</name>
        <dbReference type="ChEBI" id="CHEBI:194249"/>
        <note>activator</note>
    </ligand>
</feature>
<feature type="binding site" evidence="6 16">
    <location>
        <position position="371"/>
    </location>
    <ligand>
        <name>3'cADPR</name>
        <dbReference type="ChEBI" id="CHEBI:194249"/>
        <note>activator</note>
    </ligand>
</feature>
<feature type="binding site" evidence="6 16">
    <location>
        <position position="388"/>
    </location>
    <ligand>
        <name>3'cADPR</name>
        <dbReference type="ChEBI" id="CHEBI:194249"/>
        <note>activator</note>
    </ligand>
</feature>
<feature type="binding site" evidence="6 16">
    <location>
        <position position="399"/>
    </location>
    <ligand>
        <name>3'cADPR</name>
        <dbReference type="ChEBI" id="CHEBI:194249"/>
        <note>activator</note>
    </ligand>
</feature>
<feature type="binding site" evidence="6 16">
    <location>
        <position position="403"/>
    </location>
    <ligand>
        <name>3'cADPR</name>
        <dbReference type="ChEBI" id="CHEBI:194249"/>
        <note>activator</note>
    </ligand>
</feature>
<feature type="mutagenesis site" description="No longer confers resistance to phage. Loss of NAD(+) hydrolase activity, no longer binds NAD(+), oligomerizes correctly. No change in NAD(+) levels during SPO1 infection, still dimerizes in response to signal." evidence="3 4 5">
    <original>N</original>
    <variation>A</variation>
    <location>
        <position position="112"/>
    </location>
</feature>
<feature type="mutagenesis site" description="Loss of NAD(+) hydrolase activity, does not oligomerize correctly." evidence="4">
    <original>H</original>
    <variation>A</variation>
    <location>
        <position position="152"/>
    </location>
</feature>
<feature type="mutagenesis site" description="No resistance to phage SPO1, no oligomerization in absence of signal, a little bit of dimer seen in response to signal." evidence="3">
    <original>R</original>
    <variation>A</variation>
    <location>
        <position position="371"/>
    </location>
</feature>
<feature type="helix" evidence="18">
    <location>
        <begin position="5"/>
        <end position="19"/>
    </location>
</feature>
<feature type="strand" evidence="18">
    <location>
        <begin position="23"/>
        <end position="27"/>
    </location>
</feature>
<feature type="helix" evidence="18">
    <location>
        <begin position="29"/>
        <end position="32"/>
    </location>
</feature>
<feature type="turn" evidence="20">
    <location>
        <begin position="33"/>
        <end position="36"/>
    </location>
</feature>
<feature type="helix" evidence="18">
    <location>
        <begin position="40"/>
        <end position="43"/>
    </location>
</feature>
<feature type="turn" evidence="18">
    <location>
        <begin position="49"/>
        <end position="52"/>
    </location>
</feature>
<feature type="helix" evidence="20">
    <location>
        <begin position="55"/>
        <end position="57"/>
    </location>
</feature>
<feature type="helix" evidence="18">
    <location>
        <begin position="60"/>
        <end position="68"/>
    </location>
</feature>
<feature type="strand" evidence="18">
    <location>
        <begin position="70"/>
        <end position="72"/>
    </location>
</feature>
<feature type="helix" evidence="18">
    <location>
        <begin position="73"/>
        <end position="90"/>
    </location>
</feature>
<feature type="helix" evidence="18">
    <location>
        <begin position="95"/>
        <end position="102"/>
    </location>
</feature>
<feature type="strand" evidence="18">
    <location>
        <begin position="107"/>
        <end position="110"/>
    </location>
</feature>
<feature type="helix" evidence="18">
    <location>
        <begin position="116"/>
        <end position="123"/>
    </location>
</feature>
<feature type="strand" evidence="18">
    <location>
        <begin position="128"/>
        <end position="131"/>
    </location>
</feature>
<feature type="helix" evidence="18">
    <location>
        <begin position="135"/>
        <end position="138"/>
    </location>
</feature>
<feature type="strand" evidence="18">
    <location>
        <begin position="145"/>
        <end position="150"/>
    </location>
</feature>
<feature type="helix" evidence="18">
    <location>
        <begin position="158"/>
        <end position="160"/>
    </location>
</feature>
<feature type="helix" evidence="18">
    <location>
        <begin position="166"/>
        <end position="170"/>
    </location>
</feature>
<feature type="helix" evidence="18">
    <location>
        <begin position="172"/>
        <end position="188"/>
    </location>
</feature>
<feature type="strand" evidence="18">
    <location>
        <begin position="189"/>
        <end position="195"/>
    </location>
</feature>
<feature type="helix" evidence="18">
    <location>
        <begin position="203"/>
        <end position="210"/>
    </location>
</feature>
<feature type="helix" evidence="20">
    <location>
        <begin position="215"/>
        <end position="217"/>
    </location>
</feature>
<feature type="strand" evidence="18">
    <location>
        <begin position="221"/>
        <end position="226"/>
    </location>
</feature>
<feature type="strand" evidence="18">
    <location>
        <begin position="232"/>
        <end position="234"/>
    </location>
</feature>
<feature type="helix" evidence="18">
    <location>
        <begin position="236"/>
        <end position="255"/>
    </location>
</feature>
<feature type="strand" evidence="18">
    <location>
        <begin position="258"/>
        <end position="265"/>
    </location>
</feature>
<feature type="helix" evidence="18">
    <location>
        <begin position="267"/>
        <end position="281"/>
    </location>
</feature>
<feature type="strand" evidence="19">
    <location>
        <begin position="284"/>
        <end position="290"/>
    </location>
</feature>
<feature type="helix" evidence="19">
    <location>
        <begin position="299"/>
        <end position="315"/>
    </location>
</feature>
<feature type="strand" evidence="19">
    <location>
        <begin position="319"/>
        <end position="322"/>
    </location>
</feature>
<feature type="turn" evidence="19">
    <location>
        <begin position="326"/>
        <end position="328"/>
    </location>
</feature>
<feature type="helix" evidence="19">
    <location>
        <begin position="329"/>
        <end position="341"/>
    </location>
</feature>
<feature type="turn" evidence="19">
    <location>
        <begin position="342"/>
        <end position="344"/>
    </location>
</feature>
<feature type="helix" evidence="19">
    <location>
        <begin position="347"/>
        <end position="349"/>
    </location>
</feature>
<feature type="strand" evidence="19">
    <location>
        <begin position="351"/>
        <end position="354"/>
    </location>
</feature>
<feature type="helix" evidence="19">
    <location>
        <begin position="361"/>
        <end position="365"/>
    </location>
</feature>
<feature type="helix" evidence="19">
    <location>
        <begin position="367"/>
        <end position="375"/>
    </location>
</feature>
<feature type="strand" evidence="19">
    <location>
        <begin position="379"/>
        <end position="385"/>
    </location>
</feature>
<feature type="strand" evidence="19">
    <location>
        <begin position="387"/>
        <end position="390"/>
    </location>
</feature>
<feature type="strand" evidence="19">
    <location>
        <begin position="393"/>
        <end position="396"/>
    </location>
</feature>
<feature type="helix" evidence="19">
    <location>
        <begin position="398"/>
        <end position="409"/>
    </location>
</feature>
<feature type="strand" evidence="19">
    <location>
        <begin position="413"/>
        <end position="416"/>
    </location>
</feature>
<feature type="helix" evidence="19">
    <location>
        <begin position="418"/>
        <end position="420"/>
    </location>
</feature>
<feature type="helix" evidence="19">
    <location>
        <begin position="422"/>
        <end position="433"/>
    </location>
</feature>
<feature type="helix" evidence="19">
    <location>
        <begin position="435"/>
        <end position="438"/>
    </location>
</feature>
<feature type="helix" evidence="19">
    <location>
        <begin position="444"/>
        <end position="452"/>
    </location>
</feature>
<feature type="helix" evidence="19">
    <location>
        <begin position="460"/>
        <end position="474"/>
    </location>
</feature>
<gene>
    <name evidence="8" type="primary">thsA</name>
    <name evidence="15" type="ORF">II9_05448</name>
</gene>
<evidence type="ECO:0000250" key="1">
    <source>
        <dbReference type="UniProtKB" id="Q9WYW0"/>
    </source>
</evidence>
<evidence type="ECO:0000255" key="2">
    <source>
        <dbReference type="PROSITE-ProRule" id="PRU00236"/>
    </source>
</evidence>
<evidence type="ECO:0000269" key="3">
    <source>
    </source>
</evidence>
<evidence type="ECO:0000269" key="4">
    <source>
    </source>
</evidence>
<evidence type="ECO:0000269" key="5">
    <source>
    </source>
</evidence>
<evidence type="ECO:0000269" key="6">
    <source>
    </source>
</evidence>
<evidence type="ECO:0000269" key="7">
    <source>
    </source>
</evidence>
<evidence type="ECO:0000303" key="8">
    <source>
    </source>
</evidence>
<evidence type="ECO:0000303" key="9">
    <source>
    </source>
</evidence>
<evidence type="ECO:0000303" key="10">
    <source>
    </source>
</evidence>
<evidence type="ECO:0000303" key="11">
    <source>
    </source>
</evidence>
<evidence type="ECO:0000305" key="12"/>
<evidence type="ECO:0000305" key="13">
    <source>
    </source>
</evidence>
<evidence type="ECO:0000305" key="14">
    <source>
    </source>
</evidence>
<evidence type="ECO:0000312" key="15">
    <source>
        <dbReference type="EMBL" id="EJR09240.1"/>
    </source>
</evidence>
<evidence type="ECO:0000312" key="16">
    <source>
        <dbReference type="PDB" id="7UXS"/>
    </source>
</evidence>
<evidence type="ECO:0007744" key="17">
    <source>
        <dbReference type="PDB" id="6LHX"/>
    </source>
</evidence>
<evidence type="ECO:0007829" key="18">
    <source>
        <dbReference type="PDB" id="6LHX"/>
    </source>
</evidence>
<evidence type="ECO:0007829" key="19">
    <source>
        <dbReference type="PDB" id="7UXS"/>
    </source>
</evidence>
<evidence type="ECO:0007829" key="20">
    <source>
        <dbReference type="PDB" id="8BTP"/>
    </source>
</evidence>
<sequence length="476" mass="55190">MKMNPIVELFIKDFTKEVMEENAAIFAGAGLSMSVGYVSWAKLLEPIAQEIGLDVNKENDLVSLAQYYCNENQGNRGRINQIILDEFSRKVDLTENHKILARLPIHTYWTTNYDRLIEKALEEENKIADVKYTVKQLATTKVKRDAVVYKMHGDVEHPSEAVLIKDDYEKYSIKMDPYIKALSGDLVSKTFLFVGFSFTDPNLDYILSRVRSAYERDQRRHYCLIKKEERRPDELEADFEYRVRKQELFISDLSRFNIKTIVLNNYNEITEILQRIENNIKTKTVFLSGSAVEYNHWETEHAEQFIHQLSKELIRKDFNIVSGFGLGVGSFVINGVLEELYMNQGTIDDDRLILRPFPQGKKGEEQWDKYRRDMITRTGVSIFLYGNKIDKGQVVKAKGVQSEFNISFEQNNYVVPVGATGYIAKDLWNKVNEEFETYYPGADARMKKLFGELNNEALSIEELINTIIEFVEILSN</sequence>
<comment type="function">
    <text evidence="3 4 5 6">NAD(+) hydrolyzing component (NADase) of the Thoeris antiviral defense system, composed of ThsA and ThsB. Activated by a signal molecule generated by endogenous ThsB (AC J8G8J6) or ThsB' (AC J8CSK2, probably 3'cADPR), by TIR1 and TIR2 from B.dafuensis or by BdTIR from B.distachyon (AC I1GTC2, probably 2'cADPR). Upon activation binds and hydrolyzes NAD(+), leading to cell death and inhibition of phage replication. Not seen to bind DNA (PubMed:32499527, PubMed:34853457, PubMed:36174646). Activation is 50-100x more sensitive to 3' cyclic ADP-D-ribose (3'cADPR) than 2'cADPR (PubMed:36174646). In another paper ThsA is not activated by any tested cADPR isomer, although it binds 3'cADPR; it was suggested the protein is already in a fully active state (PubMed:36048923). Expression of ThsA and ThsB in B.subtilis (strain BEST7003) confers resistance to phages phi29, SBSphiC, SBSphiJ and SPO1 (PubMed:29371424, PubMed:34853457). At multiplicity of infection (MOI) of 0.05 Thoeris-encoding cultures grow normally when infected with SPO1, at MOI 5 cultures collapse prematurely by 90 minutes post-infection, thus the phage are not able to complete a replication cycle. NAD(+) levels fall and ADP-D-ribose levels rise 60 minutes post-infection. Thoeris cultures eventually recover, but retain the same susceptibility to SPO1 (PubMed:34853457).</text>
</comment>
<comment type="catalytic activity">
    <reaction evidence="4 6">
        <text>NAD(+) + H2O = ADP-D-ribose + nicotinamide + H(+)</text>
        <dbReference type="Rhea" id="RHEA:16301"/>
        <dbReference type="ChEBI" id="CHEBI:15377"/>
        <dbReference type="ChEBI" id="CHEBI:15378"/>
        <dbReference type="ChEBI" id="CHEBI:17154"/>
        <dbReference type="ChEBI" id="CHEBI:57540"/>
        <dbReference type="ChEBI" id="CHEBI:57967"/>
        <dbReference type="EC" id="3.2.2.5"/>
    </reaction>
    <physiologicalReaction direction="left-to-right" evidence="4 6">
        <dbReference type="Rhea" id="RHEA:16302"/>
    </physiologicalReaction>
</comment>
<comment type="activity regulation">
    <text evidence="5 6 7">Activated by a molecule generated by endogenous ThsB (AC J8G8J6) or ThsB' (AC J8CSK2); activation in vitro is 50-100x more sensitive to 3' cyclic ADP-D-ribose (3'cADPR) than 2'cADPR (PubMed:36174646). 3'cADPR activates the NADase function of ThsA by binding to the SLOG domain, which changes its tetramer organization, allowing NAD to access the active site (PubMed:36048923). Also activated by a signal molecule generated by B.dafuensis TIR1 (AC A0A5B8Z670) and TIR2 (AC A0A5B8Z260), and by BdTIR (AC I1GTC2), a plant protein involved in defense against bacterial infection (PubMed:34853457). The signal produced by BdTIR is probably 2'cADPR, which activates this protein, the signal produced by endogenous ThsB' is probably 3'cADPR (PubMed:36174646).</text>
</comment>
<comment type="biophysicochemical properties">
    <kinetics>
        <KM evidence="4">269.8 uM for NAD(+)</KM>
        <text evidence="4">kcat is 33.9 min(-1) (PubMed:32499527).</text>
    </kinetics>
</comment>
<comment type="subunit">
    <text evidence="4 5 6">Homotetramer formed by dimer of dimers; homooctamers are occasionally seen. Not seen to interact with ThsB (PubMed:32499527). In the absence of the signal generated by ThsB, 63% monomer and 20% homotetramer; in the presence of the ThsB signal product 40% of the protein is dimeric (PubMed:32499527, PubMed:34853457). Homotetramer in solution; probably dimerizes via the N-terminal sirtuin-like domain (PubMed:36048923).</text>
</comment>
<comment type="subcellular location">
    <subcellularLocation>
        <location evidence="13">Cytoplasm</location>
    </subcellularLocation>
</comment>
<comment type="domain">
    <text evidence="4 5 6">Has an N-terminal deacetylase sirtuin-like domain (SIR2, residues 1-283) and a C-terminal SLOG (STALD)-like domain (residues 284-476) (PubMed:32499527). The SIR2 domain has NAD(+) hydrolase activity (PubMed:32499527, PubMed:34853457, PubMed:36048923). The SLOG domain binds 3'cADPR; binding alters the protein conformation, allowing NAD(+) to access the active site (PubMed:36048923).</text>
</comment>
<comment type="disruption phenotype">
    <text evidence="3">When this gene is missing the Thoeris system does not confer phage resistance in B.subtilis.</text>
</comment>
<comment type="similarity">
    <text evidence="12">Belongs to the soluble Thoeris ThsA family.</text>
</comment>
<comment type="sequence caution" evidence="13">
    <conflict type="erroneous initiation">
        <sequence resource="EMBL-CDS" id="EJR09240"/>
    </conflict>
    <text>Truncated N-terminus.</text>
</comment>
<accession>J8G6Z1</accession>
<reference evidence="15" key="1">
    <citation type="submission" date="2012-04" db="EMBL/GenBank/DDBJ databases">
        <title>The Genome Sequence of Bacillus cereus MSX-D12.</title>
        <authorList>
            <consortium name="The Broad Institute Genome Sequencing Platform"/>
            <consortium name="The Broad Institute Genome Sequencing Center for Infectious Disease"/>
            <person name="Feldgarden M."/>
            <person name="Van der Auwera G.A."/>
            <person name="Mahillon J."/>
            <person name="Duprez V."/>
            <person name="Timmery S."/>
            <person name="Mattelet C."/>
            <person name="Dierick K."/>
            <person name="Sun M."/>
            <person name="Yu Z."/>
            <person name="Zhu L."/>
            <person name="Hu X."/>
            <person name="Shank E.B."/>
            <person name="Swiecicka I."/>
            <person name="Hansen B.M."/>
            <person name="Andrup L."/>
            <person name="Young S.K."/>
            <person name="Zeng Q."/>
            <person name="Gargeya S."/>
            <person name="Fitzgerald M."/>
            <person name="Haas B."/>
            <person name="Abouelleil A."/>
            <person name="Alvarado L."/>
            <person name="Arachchi H.M."/>
            <person name="Berlin A."/>
            <person name="Chapman S.B."/>
            <person name="Goldberg J."/>
            <person name="Griggs A."/>
            <person name="Gujja S."/>
            <person name="Hansen M."/>
            <person name="Howarth C."/>
            <person name="Imamovic A."/>
            <person name="Larimer J."/>
            <person name="McCowen C."/>
            <person name="Montmayeur A."/>
            <person name="Murphy C."/>
            <person name="Neiman D."/>
            <person name="Pearson M."/>
            <person name="Priest M."/>
            <person name="Roberts A."/>
            <person name="Saif S."/>
            <person name="Shea T."/>
            <person name="Sisk P."/>
            <person name="Sykes S."/>
            <person name="Wortman J."/>
            <person name="Nusbaum C."/>
            <person name="Birren B."/>
        </authorList>
    </citation>
    <scope>NUCLEOTIDE SEQUENCE [LARGE SCALE GENOMIC DNA]</scope>
    <source>
        <strain>MSX-D12</strain>
    </source>
</reference>
<reference key="2">
    <citation type="journal article" date="2018" name="Science">
        <title>Systematic discovery of antiphage defense systems in the microbial pangenome.</title>
        <authorList>
            <person name="Doron S."/>
            <person name="Melamed S."/>
            <person name="Ofir G."/>
            <person name="Leavitt A."/>
            <person name="Lopatina A."/>
            <person name="Keren M."/>
            <person name="Amitai G."/>
            <person name="Sorek R."/>
        </authorList>
    </citation>
    <scope>FUNCTION IN ANTIVIRAL DEFENSE</scope>
    <scope>SUBCELLULAR LOCATION</scope>
    <scope>DISRUPTION PHENOTYPE</scope>
    <scope>EXPRESSION IN B.SUBTILIS</scope>
    <scope>MUTAGENESIS OF ASN-112 AND ARG-371</scope>
    <source>
        <strain>MSX-D12</strain>
    </source>
</reference>
<reference key="3">
    <citation type="journal article" date="2021" name="Nature">
        <title>Antiviral activity of bacterial TIR domains via immune signalling molecules.</title>
        <authorList>
            <person name="Ofir G."/>
            <person name="Herbst E."/>
            <person name="Baroz M."/>
            <person name="Cohen D."/>
            <person name="Millman A."/>
            <person name="Doron S."/>
            <person name="Tal N."/>
            <person name="Malheiro D.B.A."/>
            <person name="Malitsky S."/>
            <person name="Amitai G."/>
            <person name="Sorek R."/>
        </authorList>
    </citation>
    <scope>FUNCTION IN ANTIVIRAL DEFENSE</scope>
    <scope>FUNCTION AS AN NAD HYDROLASE</scope>
    <scope>ACTIVITY REGULATION</scope>
    <scope>SUBUNIT</scope>
    <scope>DOMAIN</scope>
    <scope>MUTAGENESIS OF ASN-112</scope>
    <source>
        <strain>MSX-D12</strain>
    </source>
</reference>
<reference key="4">
    <citation type="journal article" date="2022" name="Nature">
        <title>Viruses inhibit TIR gcADPR signalling to overcome bacterial defence.</title>
        <authorList>
            <person name="Leavitt A."/>
            <person name="Yirmiya E."/>
            <person name="Amitai G."/>
            <person name="Lu A."/>
            <person name="Garb J."/>
            <person name="Herbst E."/>
            <person name="Morehouse B.R."/>
            <person name="Hobbs S.J."/>
            <person name="Antine S.P."/>
            <person name="Sun Z.J."/>
            <person name="Kranzusch P.J."/>
            <person name="Sorek R."/>
        </authorList>
    </citation>
    <scope>FUNCTION</scope>
    <scope>ACTIVITY REGULATION</scope>
    <source>
        <strain>MSX-D12</strain>
    </source>
</reference>
<reference evidence="17" key="5">
    <citation type="journal article" date="2020" name="Nat. Commun.">
        <title>Structural and functional evidence of bacterial antiphage protection by Thoeris defense system via NAD+ degradation.</title>
        <authorList>
            <person name="Ka D."/>
            <person name="Oh H."/>
            <person name="Park E."/>
            <person name="Kim J.H."/>
            <person name="Bae E."/>
        </authorList>
    </citation>
    <scope>X-RAY CRYSTALLOGRAPHY (2.50 ANGSTROMS)</scope>
    <scope>FUNCTION AS AN NAD HYDROLASE</scope>
    <scope>CATALYTIC ACTIVITY</scope>
    <scope>PROBABLE ACTIVE SITE</scope>
    <scope>BIOPHYSICOCHEMICAL PROPERTIES</scope>
    <scope>SUBUNIT</scope>
    <scope>DOMAIN</scope>
    <scope>MUTAGENESIS OF ASN-112 AND HIS-152</scope>
    <source>
        <strain>MSX-D12</strain>
    </source>
</reference>
<reference evidence="16" key="6">
    <citation type="journal article" date="2022" name="Science">
        <title>Cyclic ADP ribose isomers: Production, chemical structures, and immune signaling.</title>
        <authorList>
            <person name="Manik M.K."/>
            <person name="Shi Y."/>
            <person name="Li S."/>
            <person name="Zaydman M.A."/>
            <person name="Damaraju N."/>
            <person name="Eastman S."/>
            <person name="Smith T.G."/>
            <person name="Gu W."/>
            <person name="Masic V."/>
            <person name="Mosaiab T."/>
            <person name="Weagley J.S."/>
            <person name="Hancock S.J."/>
            <person name="Vasquez E."/>
            <person name="Hartley-Tassell L."/>
            <person name="Kargios N."/>
            <person name="Maruta N."/>
            <person name="Lim B.Y.J."/>
            <person name="Burdett H."/>
            <person name="Landsberg M.J."/>
            <person name="Schembri M.A."/>
            <person name="Prokes I."/>
            <person name="Song L."/>
            <person name="Grant M."/>
            <person name="DiAntonio A."/>
            <person name="Nanson J.D."/>
            <person name="Guo M."/>
            <person name="Milbrandt J."/>
            <person name="Ve T."/>
            <person name="Kobe B."/>
        </authorList>
    </citation>
    <scope>X-RAY CRYSTALLOGRAPHY (1.57 ANGSTROMS) OF 284-476 IN COMPLEX WITH 3'CADPR</scope>
    <scope>FUNCTION</scope>
    <scope>CATALYTIC ACTIVITY</scope>
    <scope>ACTIVITY REGULATION</scope>
    <scope>SUBUNIT</scope>
    <scope>DOMAIN</scope>
    <scope>CADPR-BINDING</scope>
</reference>
<protein>
    <recommendedName>
        <fullName evidence="9">NAD(+) hydrolase ThsA</fullName>
        <shortName evidence="11">BcThsA</shortName>
        <shortName evidence="10">NADase ThsA</shortName>
        <ecNumber evidence="4 6">3.2.2.5</ecNumber>
    </recommendedName>
    <alternativeName>
        <fullName evidence="8">Thoeris protein ThsA</fullName>
    </alternativeName>
</protein>
<organism>
    <name type="scientific">Bacillus cereus (strain MSX-D12)</name>
    <dbReference type="NCBI Taxonomy" id="1053222"/>
    <lineage>
        <taxon>Bacteria</taxon>
        <taxon>Bacillati</taxon>
        <taxon>Bacillota</taxon>
        <taxon>Bacilli</taxon>
        <taxon>Bacillales</taxon>
        <taxon>Bacillaceae</taxon>
        <taxon>Bacillus</taxon>
        <taxon>Bacillus cereus group</taxon>
    </lineage>
</organism>
<dbReference type="EC" id="3.2.2.5" evidence="4 6"/>
<dbReference type="EMBL" id="AHEQ01000050">
    <property type="protein sequence ID" value="EJR09240.1"/>
    <property type="status" value="ALT_INIT"/>
    <property type="molecule type" value="Genomic_DNA"/>
</dbReference>
<dbReference type="PDB" id="6LHX">
    <property type="method" value="X-ray"/>
    <property type="resolution" value="2.50 A"/>
    <property type="chains" value="A/B/C/D=3-476"/>
</dbReference>
<dbReference type="PDB" id="7UXS">
    <property type="method" value="X-ray"/>
    <property type="resolution" value="1.57 A"/>
    <property type="chains" value="A/B=284-476"/>
</dbReference>
<dbReference type="PDB" id="8BTO">
    <property type="method" value="EM"/>
    <property type="resolution" value="2.96 A"/>
    <property type="chains" value="A/B/C/D/E/F/G/H/I/J/K/L=1-476"/>
</dbReference>
<dbReference type="PDB" id="8BTP">
    <property type="method" value="EM"/>
    <property type="resolution" value="2.75 A"/>
    <property type="chains" value="A/B/C/D/E/F/G/H/I/J/K/L=1-476"/>
</dbReference>
<dbReference type="PDBsum" id="6LHX"/>
<dbReference type="PDBsum" id="7UXS"/>
<dbReference type="PDBsum" id="8BTO"/>
<dbReference type="PDBsum" id="8BTP"/>
<dbReference type="EMDB" id="EMD-16233"/>
<dbReference type="EMDB" id="EMD-16234"/>
<dbReference type="SMR" id="J8G6Z1"/>
<dbReference type="PATRIC" id="fig|1053222.3.peg.5515"/>
<dbReference type="HOGENOM" id="CLU_028011_0_0_9"/>
<dbReference type="GO" id="GO:0005737">
    <property type="term" value="C:cytoplasm"/>
    <property type="evidence" value="ECO:0007669"/>
    <property type="project" value="UniProtKB-SubCell"/>
</dbReference>
<dbReference type="GO" id="GO:0016787">
    <property type="term" value="F:hydrolase activity"/>
    <property type="evidence" value="ECO:0007669"/>
    <property type="project" value="UniProtKB-KW"/>
</dbReference>
<dbReference type="GO" id="GO:0000166">
    <property type="term" value="F:nucleotide binding"/>
    <property type="evidence" value="ECO:0007669"/>
    <property type="project" value="UniProtKB-KW"/>
</dbReference>
<dbReference type="GO" id="GO:0051607">
    <property type="term" value="P:defense response to virus"/>
    <property type="evidence" value="ECO:0007669"/>
    <property type="project" value="UniProtKB-KW"/>
</dbReference>
<dbReference type="CDD" id="cd01406">
    <property type="entry name" value="SIR2-like"/>
    <property type="match status" value="1"/>
</dbReference>
<dbReference type="InterPro" id="IPR029035">
    <property type="entry name" value="DHS-like_NAD/FAD-binding_dom"/>
</dbReference>
<dbReference type="InterPro" id="IPR026590">
    <property type="entry name" value="Ssirtuin_cat_dom"/>
</dbReference>
<dbReference type="InterPro" id="IPR041486">
    <property type="entry name" value="ThsA_STALD"/>
</dbReference>
<dbReference type="Pfam" id="PF13289">
    <property type="entry name" value="SIR2_2"/>
    <property type="match status" value="1"/>
</dbReference>
<dbReference type="Pfam" id="PF18185">
    <property type="entry name" value="STALD"/>
    <property type="match status" value="1"/>
</dbReference>
<dbReference type="SUPFAM" id="SSF52467">
    <property type="entry name" value="DHS-like NAD/FAD-binding domain"/>
    <property type="match status" value="1"/>
</dbReference>
<dbReference type="PROSITE" id="PS50305">
    <property type="entry name" value="SIRTUIN"/>
    <property type="match status" value="1"/>
</dbReference>
<proteinExistence type="evidence at protein level"/>
<name>THSA_BACCS</name>